<organism>
    <name type="scientific">Pasteurella multocida (strain Pm70)</name>
    <dbReference type="NCBI Taxonomy" id="272843"/>
    <lineage>
        <taxon>Bacteria</taxon>
        <taxon>Pseudomonadati</taxon>
        <taxon>Pseudomonadota</taxon>
        <taxon>Gammaproteobacteria</taxon>
        <taxon>Pasteurellales</taxon>
        <taxon>Pasteurellaceae</taxon>
        <taxon>Pasteurella</taxon>
    </lineage>
</organism>
<accession>Q9CN71</accession>
<sequence length="365" mass="42289">MNKLALYCRPGFEKELAAEISEKAAELGIFGFARVEENQGYVIFECYQTDDADRLAREIPFNQLIFARQMIVVSDLLTDLPVQDRISPIIQQYQAIAHQINLTYSTELLVETADTNEAKSLSAFCRKFTVPLRQALKKQGWLQGTRHHKQGLTLHILMLDSTQCYVGYSYNYNHSEHFMGIPRLKFPLDAPSRSTLKLEEAILTFLSREEEKKRLNEQMYAVDLGACPGGWTYQLVKRGLFVYAVDHGKMAASLHDTGRIEHCAEDGFKFQPPKRSKIDWLVCDMVEQPSRISQLILKWLVNGWCHETIFNLKLPMKKRYLEVKKCLQMIEESLEKQGFRYHIQAKHLYHDREEITVHIAVKSLD</sequence>
<evidence type="ECO:0000255" key="1">
    <source>
        <dbReference type="HAMAP-Rule" id="MF_01551"/>
    </source>
</evidence>
<comment type="function">
    <text evidence="1">Catalyzes the 2'-O-methylation at nucleotide C2498 in 23S rRNA.</text>
</comment>
<comment type="catalytic activity">
    <reaction evidence="1">
        <text>cytidine(2498) in 23S rRNA + S-adenosyl-L-methionine = 2'-O-methylcytidine(2498) in 23S rRNA + S-adenosyl-L-homocysteine + H(+)</text>
        <dbReference type="Rhea" id="RHEA:42788"/>
        <dbReference type="Rhea" id="RHEA-COMP:10244"/>
        <dbReference type="Rhea" id="RHEA-COMP:10245"/>
        <dbReference type="ChEBI" id="CHEBI:15378"/>
        <dbReference type="ChEBI" id="CHEBI:57856"/>
        <dbReference type="ChEBI" id="CHEBI:59789"/>
        <dbReference type="ChEBI" id="CHEBI:74495"/>
        <dbReference type="ChEBI" id="CHEBI:82748"/>
        <dbReference type="EC" id="2.1.1.186"/>
    </reaction>
</comment>
<comment type="subunit">
    <text evidence="1">Monomer.</text>
</comment>
<comment type="subcellular location">
    <subcellularLocation>
        <location evidence="1">Cytoplasm</location>
    </subcellularLocation>
</comment>
<comment type="similarity">
    <text evidence="1">Belongs to the class I-like SAM-binding methyltransferase superfamily. RNA methyltransferase RlmE family. RlmM subfamily.</text>
</comment>
<protein>
    <recommendedName>
        <fullName evidence="1">Ribosomal RNA large subunit methyltransferase M</fullName>
        <ecNumber evidence="1">2.1.1.186</ecNumber>
    </recommendedName>
    <alternativeName>
        <fullName evidence="1">23S rRNA (cytidine2498-2'-O)-methyltransferase</fullName>
    </alternativeName>
    <alternativeName>
        <fullName evidence="1">23S rRNA 2'-O-ribose methyltransferase RlmM</fullName>
    </alternativeName>
</protein>
<reference key="1">
    <citation type="journal article" date="2001" name="Proc. Natl. Acad. Sci. U.S.A.">
        <title>Complete genomic sequence of Pasteurella multocida Pm70.</title>
        <authorList>
            <person name="May B.J."/>
            <person name="Zhang Q."/>
            <person name="Li L.L."/>
            <person name="Paustian M.L."/>
            <person name="Whittam T.S."/>
            <person name="Kapur V."/>
        </authorList>
    </citation>
    <scope>NUCLEOTIDE SEQUENCE [LARGE SCALE GENOMIC DNA]</scope>
    <source>
        <strain>Pm70</strain>
    </source>
</reference>
<feature type="chain" id="PRO_0000070411" description="Ribosomal RNA large subunit methyltransferase M">
    <location>
        <begin position="1"/>
        <end position="365"/>
    </location>
</feature>
<feature type="active site" description="Proton acceptor" evidence="1">
    <location>
        <position position="313"/>
    </location>
</feature>
<feature type="binding site" evidence="1">
    <location>
        <position position="194"/>
    </location>
    <ligand>
        <name>S-adenosyl-L-methionine</name>
        <dbReference type="ChEBI" id="CHEBI:59789"/>
    </ligand>
</feature>
<feature type="binding site" evidence="1">
    <location>
        <begin position="227"/>
        <end position="230"/>
    </location>
    <ligand>
        <name>S-adenosyl-L-methionine</name>
        <dbReference type="ChEBI" id="CHEBI:59789"/>
    </ligand>
</feature>
<feature type="binding site" evidence="1">
    <location>
        <position position="246"/>
    </location>
    <ligand>
        <name>S-adenosyl-L-methionine</name>
        <dbReference type="ChEBI" id="CHEBI:59789"/>
    </ligand>
</feature>
<feature type="binding site" evidence="1">
    <location>
        <position position="266"/>
    </location>
    <ligand>
        <name>S-adenosyl-L-methionine</name>
        <dbReference type="ChEBI" id="CHEBI:59789"/>
    </ligand>
</feature>
<feature type="binding site" evidence="1">
    <location>
        <position position="284"/>
    </location>
    <ligand>
        <name>S-adenosyl-L-methionine</name>
        <dbReference type="ChEBI" id="CHEBI:59789"/>
    </ligand>
</feature>
<name>RLMM_PASMU</name>
<gene>
    <name evidence="1" type="primary">rlmM</name>
    <name type="ordered locus">PM0568</name>
</gene>
<proteinExistence type="inferred from homology"/>
<keyword id="KW-0963">Cytoplasm</keyword>
<keyword id="KW-0489">Methyltransferase</keyword>
<keyword id="KW-1185">Reference proteome</keyword>
<keyword id="KW-0698">rRNA processing</keyword>
<keyword id="KW-0949">S-adenosyl-L-methionine</keyword>
<keyword id="KW-0808">Transferase</keyword>
<dbReference type="EC" id="2.1.1.186" evidence="1"/>
<dbReference type="EMBL" id="AE004439">
    <property type="protein sequence ID" value="AAK02652.1"/>
    <property type="molecule type" value="Genomic_DNA"/>
</dbReference>
<dbReference type="RefSeq" id="WP_010906728.1">
    <property type="nucleotide sequence ID" value="NC_002663.1"/>
</dbReference>
<dbReference type="SMR" id="Q9CN71"/>
<dbReference type="STRING" id="272843.PM0568"/>
<dbReference type="EnsemblBacteria" id="AAK02652">
    <property type="protein sequence ID" value="AAK02652"/>
    <property type="gene ID" value="PM0568"/>
</dbReference>
<dbReference type="KEGG" id="pmu:PM0568"/>
<dbReference type="PATRIC" id="fig|272843.6.peg.575"/>
<dbReference type="HOGENOM" id="CLU_043780_0_0_6"/>
<dbReference type="OrthoDB" id="154490at2"/>
<dbReference type="Proteomes" id="UP000000809">
    <property type="component" value="Chromosome"/>
</dbReference>
<dbReference type="GO" id="GO:0005737">
    <property type="term" value="C:cytoplasm"/>
    <property type="evidence" value="ECO:0007669"/>
    <property type="project" value="UniProtKB-SubCell"/>
</dbReference>
<dbReference type="GO" id="GO:0008757">
    <property type="term" value="F:S-adenosylmethionine-dependent methyltransferase activity"/>
    <property type="evidence" value="ECO:0007669"/>
    <property type="project" value="UniProtKB-UniRule"/>
</dbReference>
<dbReference type="GO" id="GO:0032259">
    <property type="term" value="P:methylation"/>
    <property type="evidence" value="ECO:0007669"/>
    <property type="project" value="UniProtKB-KW"/>
</dbReference>
<dbReference type="GO" id="GO:0006364">
    <property type="term" value="P:rRNA processing"/>
    <property type="evidence" value="ECO:0007669"/>
    <property type="project" value="UniProtKB-UniRule"/>
</dbReference>
<dbReference type="Gene3D" id="3.30.2300.20">
    <property type="match status" value="1"/>
</dbReference>
<dbReference type="Gene3D" id="3.30.70.2810">
    <property type="match status" value="1"/>
</dbReference>
<dbReference type="Gene3D" id="3.40.50.150">
    <property type="entry name" value="Vaccinia Virus protein VP39"/>
    <property type="match status" value="1"/>
</dbReference>
<dbReference type="HAMAP" id="MF_01551">
    <property type="entry name" value="23SrRNA_methyltr_M"/>
    <property type="match status" value="1"/>
</dbReference>
<dbReference type="InterPro" id="IPR040739">
    <property type="entry name" value="RlmM_FDX"/>
</dbReference>
<dbReference type="InterPro" id="IPR048646">
    <property type="entry name" value="RlmM_THUMP-like"/>
</dbReference>
<dbReference type="InterPro" id="IPR002877">
    <property type="entry name" value="RNA_MeTrfase_FtsJ_dom"/>
</dbReference>
<dbReference type="InterPro" id="IPR011224">
    <property type="entry name" value="rRNA_MeTrfase_M"/>
</dbReference>
<dbReference type="InterPro" id="IPR029063">
    <property type="entry name" value="SAM-dependent_MTases_sf"/>
</dbReference>
<dbReference type="NCBIfam" id="NF008734">
    <property type="entry name" value="PRK11760.1"/>
    <property type="match status" value="1"/>
</dbReference>
<dbReference type="PANTHER" id="PTHR37524">
    <property type="entry name" value="RIBOSOMAL RNA LARGE SUBUNIT METHYLTRANSFERASE M"/>
    <property type="match status" value="1"/>
</dbReference>
<dbReference type="PANTHER" id="PTHR37524:SF2">
    <property type="entry name" value="RIBOSOMAL RNA METHYLTRANSFERASE FTSJ DOMAIN-CONTAINING PROTEIN"/>
    <property type="match status" value="1"/>
</dbReference>
<dbReference type="Pfam" id="PF01728">
    <property type="entry name" value="FtsJ"/>
    <property type="match status" value="1"/>
</dbReference>
<dbReference type="Pfam" id="PF18125">
    <property type="entry name" value="RlmM_FDX"/>
    <property type="match status" value="1"/>
</dbReference>
<dbReference type="Pfam" id="PF21239">
    <property type="entry name" value="RLMM_N"/>
    <property type="match status" value="1"/>
</dbReference>
<dbReference type="PIRSF" id="PIRSF028774">
    <property type="entry name" value="UCP028774"/>
    <property type="match status" value="1"/>
</dbReference>
<dbReference type="SUPFAM" id="SSF53335">
    <property type="entry name" value="S-adenosyl-L-methionine-dependent methyltransferases"/>
    <property type="match status" value="1"/>
</dbReference>